<feature type="chain" id="PRO_1000212119" description="Co-chaperonin GroES">
    <location>
        <begin position="1"/>
        <end position="89"/>
    </location>
</feature>
<sequence>MKVIPLGERLLIKPIKEEKRTEGGIVLPDTAKEKPMKAEVIEIGKDVEDIDIKVGDKVIFSKYAGTEIKIDDEDYILIDQDDILAKVEE</sequence>
<gene>
    <name evidence="1" type="primary">groES</name>
    <name evidence="1" type="synonym">groS</name>
    <name type="ordered locus">Kole_1626</name>
</gene>
<proteinExistence type="inferred from homology"/>
<accession>C5CF51</accession>
<reference key="1">
    <citation type="submission" date="2009-06" db="EMBL/GenBank/DDBJ databases">
        <title>Complete sequence of Thermotogales bacterium TBF 19.5.1.</title>
        <authorList>
            <consortium name="US DOE Joint Genome Institute"/>
            <person name="Lucas S."/>
            <person name="Copeland A."/>
            <person name="Lapidus A."/>
            <person name="Glavina del Rio T."/>
            <person name="Tice H."/>
            <person name="Bruce D."/>
            <person name="Goodwin L."/>
            <person name="Pitluck S."/>
            <person name="Chertkov O."/>
            <person name="Brettin T."/>
            <person name="Detter J.C."/>
            <person name="Han C."/>
            <person name="Schmutz J."/>
            <person name="Larimer F."/>
            <person name="Land M."/>
            <person name="Hauser L."/>
            <person name="Kyrpides N."/>
            <person name="Ovchinnikova G."/>
            <person name="Noll K."/>
        </authorList>
    </citation>
    <scope>NUCLEOTIDE SEQUENCE [LARGE SCALE GENOMIC DNA]</scope>
    <source>
        <strain>ATCC BAA-1733 / DSM 21960 / TBF 19.5.1</strain>
    </source>
</reference>
<comment type="function">
    <text evidence="1">Together with the chaperonin GroEL, plays an essential role in assisting protein folding. The GroEL-GroES system forms a nano-cage that allows encapsulation of the non-native substrate proteins and provides a physical environment optimized to promote and accelerate protein folding. GroES binds to the apical surface of the GroEL ring, thereby capping the opening of the GroEL channel.</text>
</comment>
<comment type="subunit">
    <text evidence="1">Heptamer of 7 subunits arranged in a ring. Interacts with the chaperonin GroEL.</text>
</comment>
<comment type="subcellular location">
    <subcellularLocation>
        <location evidence="1">Cytoplasm</location>
    </subcellularLocation>
</comment>
<comment type="similarity">
    <text evidence="1">Belongs to the GroES chaperonin family.</text>
</comment>
<keyword id="KW-0143">Chaperone</keyword>
<keyword id="KW-0963">Cytoplasm</keyword>
<keyword id="KW-1185">Reference proteome</keyword>
<protein>
    <recommendedName>
        <fullName evidence="1">Co-chaperonin GroES</fullName>
    </recommendedName>
    <alternativeName>
        <fullName evidence="1">10 kDa chaperonin</fullName>
    </alternativeName>
    <alternativeName>
        <fullName evidence="1">Chaperonin-10</fullName>
        <shortName evidence="1">Cpn10</shortName>
    </alternativeName>
</protein>
<name>CH10_KOSOT</name>
<organism>
    <name type="scientific">Kosmotoga olearia (strain ATCC BAA-1733 / DSM 21960 / TBF 19.5.1)</name>
    <dbReference type="NCBI Taxonomy" id="521045"/>
    <lineage>
        <taxon>Bacteria</taxon>
        <taxon>Thermotogati</taxon>
        <taxon>Thermotogota</taxon>
        <taxon>Thermotogae</taxon>
        <taxon>Kosmotogales</taxon>
        <taxon>Kosmotogaceae</taxon>
        <taxon>Kosmotoga</taxon>
    </lineage>
</organism>
<dbReference type="EMBL" id="CP001634">
    <property type="protein sequence ID" value="ACR80316.1"/>
    <property type="molecule type" value="Genomic_DNA"/>
</dbReference>
<dbReference type="RefSeq" id="WP_015868961.1">
    <property type="nucleotide sequence ID" value="NC_012785.1"/>
</dbReference>
<dbReference type="SMR" id="C5CF51"/>
<dbReference type="STRING" id="521045.Kole_1626"/>
<dbReference type="KEGG" id="kol:Kole_1626"/>
<dbReference type="eggNOG" id="COG0234">
    <property type="taxonomic scope" value="Bacteria"/>
</dbReference>
<dbReference type="HOGENOM" id="CLU_132825_2_0_0"/>
<dbReference type="OrthoDB" id="9806791at2"/>
<dbReference type="Proteomes" id="UP000002382">
    <property type="component" value="Chromosome"/>
</dbReference>
<dbReference type="GO" id="GO:0005737">
    <property type="term" value="C:cytoplasm"/>
    <property type="evidence" value="ECO:0007669"/>
    <property type="project" value="UniProtKB-SubCell"/>
</dbReference>
<dbReference type="GO" id="GO:0005524">
    <property type="term" value="F:ATP binding"/>
    <property type="evidence" value="ECO:0007669"/>
    <property type="project" value="InterPro"/>
</dbReference>
<dbReference type="GO" id="GO:0046872">
    <property type="term" value="F:metal ion binding"/>
    <property type="evidence" value="ECO:0007669"/>
    <property type="project" value="TreeGrafter"/>
</dbReference>
<dbReference type="GO" id="GO:0044183">
    <property type="term" value="F:protein folding chaperone"/>
    <property type="evidence" value="ECO:0007669"/>
    <property type="project" value="InterPro"/>
</dbReference>
<dbReference type="GO" id="GO:0051087">
    <property type="term" value="F:protein-folding chaperone binding"/>
    <property type="evidence" value="ECO:0007669"/>
    <property type="project" value="TreeGrafter"/>
</dbReference>
<dbReference type="GO" id="GO:0051082">
    <property type="term" value="F:unfolded protein binding"/>
    <property type="evidence" value="ECO:0007669"/>
    <property type="project" value="TreeGrafter"/>
</dbReference>
<dbReference type="GO" id="GO:0051085">
    <property type="term" value="P:chaperone cofactor-dependent protein refolding"/>
    <property type="evidence" value="ECO:0007669"/>
    <property type="project" value="TreeGrafter"/>
</dbReference>
<dbReference type="CDD" id="cd00320">
    <property type="entry name" value="cpn10"/>
    <property type="match status" value="1"/>
</dbReference>
<dbReference type="FunFam" id="2.30.33.40:FF:000001">
    <property type="entry name" value="10 kDa chaperonin"/>
    <property type="match status" value="1"/>
</dbReference>
<dbReference type="Gene3D" id="2.30.33.40">
    <property type="entry name" value="GroES chaperonin"/>
    <property type="match status" value="1"/>
</dbReference>
<dbReference type="HAMAP" id="MF_00580">
    <property type="entry name" value="CH10"/>
    <property type="match status" value="1"/>
</dbReference>
<dbReference type="InterPro" id="IPR020818">
    <property type="entry name" value="Chaperonin_GroES"/>
</dbReference>
<dbReference type="InterPro" id="IPR037124">
    <property type="entry name" value="Chaperonin_GroES_sf"/>
</dbReference>
<dbReference type="InterPro" id="IPR018369">
    <property type="entry name" value="Chaprnonin_Cpn10_CS"/>
</dbReference>
<dbReference type="InterPro" id="IPR011032">
    <property type="entry name" value="GroES-like_sf"/>
</dbReference>
<dbReference type="NCBIfam" id="NF001531">
    <property type="entry name" value="PRK00364.2-2"/>
    <property type="match status" value="1"/>
</dbReference>
<dbReference type="NCBIfam" id="NF011106">
    <property type="entry name" value="PRK14533.1"/>
    <property type="match status" value="1"/>
</dbReference>
<dbReference type="PANTHER" id="PTHR10772">
    <property type="entry name" value="10 KDA HEAT SHOCK PROTEIN"/>
    <property type="match status" value="1"/>
</dbReference>
<dbReference type="PANTHER" id="PTHR10772:SF63">
    <property type="entry name" value="20 KDA CHAPERONIN, CHLOROPLASTIC"/>
    <property type="match status" value="1"/>
</dbReference>
<dbReference type="Pfam" id="PF00166">
    <property type="entry name" value="Cpn10"/>
    <property type="match status" value="1"/>
</dbReference>
<dbReference type="PRINTS" id="PR00297">
    <property type="entry name" value="CHAPERONIN10"/>
</dbReference>
<dbReference type="SMART" id="SM00883">
    <property type="entry name" value="Cpn10"/>
    <property type="match status" value="1"/>
</dbReference>
<dbReference type="SUPFAM" id="SSF50129">
    <property type="entry name" value="GroES-like"/>
    <property type="match status" value="1"/>
</dbReference>
<dbReference type="PROSITE" id="PS00681">
    <property type="entry name" value="CHAPERONINS_CPN10"/>
    <property type="match status" value="1"/>
</dbReference>
<evidence type="ECO:0000255" key="1">
    <source>
        <dbReference type="HAMAP-Rule" id="MF_00580"/>
    </source>
</evidence>